<accession>G4N287</accession>
<name>OXR2_PYRO7</name>
<protein>
    <recommendedName>
        <fullName evidence="6">FAD-linked oxidoreductase OXR2</fullName>
        <ecNumber evidence="8">1.-.-.-</ecNumber>
    </recommendedName>
    <alternativeName>
        <fullName evidence="6">Pyriculol/pyriculariol biosynthesis cluster protein OXR2</fullName>
    </alternativeName>
</protein>
<keyword id="KW-0274">FAD</keyword>
<keyword id="KW-0285">Flavoprotein</keyword>
<keyword id="KW-0325">Glycoprotein</keyword>
<keyword id="KW-0560">Oxidoreductase</keyword>
<keyword id="KW-1185">Reference proteome</keyword>
<keyword id="KW-0732">Signal</keyword>
<dbReference type="EC" id="1.-.-.-" evidence="8"/>
<dbReference type="EMBL" id="CM001233">
    <property type="protein sequence ID" value="EHA52499.1"/>
    <property type="molecule type" value="Genomic_DNA"/>
</dbReference>
<dbReference type="RefSeq" id="XP_003712306.1">
    <property type="nucleotide sequence ID" value="XM_003712258.1"/>
</dbReference>
<dbReference type="SMR" id="G4N287"/>
<dbReference type="STRING" id="242507.G4N287"/>
<dbReference type="GlyCosmos" id="G4N287">
    <property type="glycosylation" value="4 sites, No reported glycans"/>
</dbReference>
<dbReference type="EnsemblFungi" id="MGG_16812T0">
    <property type="protein sequence ID" value="MGG_16812T0"/>
    <property type="gene ID" value="MGG_16812"/>
</dbReference>
<dbReference type="GeneID" id="12984968"/>
<dbReference type="KEGG" id="mgr:MGG_16812"/>
<dbReference type="VEuPathDB" id="FungiDB:MGG_16812"/>
<dbReference type="eggNOG" id="ENOG502SJ3M">
    <property type="taxonomic scope" value="Eukaryota"/>
</dbReference>
<dbReference type="HOGENOM" id="CLU_018354_0_1_1"/>
<dbReference type="InParanoid" id="G4N287"/>
<dbReference type="OMA" id="FRFYVPI"/>
<dbReference type="OrthoDB" id="9996127at2759"/>
<dbReference type="Proteomes" id="UP000009058">
    <property type="component" value="Chromosome 3"/>
</dbReference>
<dbReference type="GO" id="GO:0071949">
    <property type="term" value="F:FAD binding"/>
    <property type="evidence" value="ECO:0007669"/>
    <property type="project" value="InterPro"/>
</dbReference>
<dbReference type="GO" id="GO:0016491">
    <property type="term" value="F:oxidoreductase activity"/>
    <property type="evidence" value="ECO:0007669"/>
    <property type="project" value="UniProtKB-KW"/>
</dbReference>
<dbReference type="Gene3D" id="3.30.465.10">
    <property type="match status" value="1"/>
</dbReference>
<dbReference type="Gene3D" id="3.40.462.20">
    <property type="match status" value="1"/>
</dbReference>
<dbReference type="Gene3D" id="3.30.43.10">
    <property type="entry name" value="Uridine Diphospho-n-acetylenolpyruvylglucosamine Reductase, domain 2"/>
    <property type="match status" value="1"/>
</dbReference>
<dbReference type="InterPro" id="IPR012951">
    <property type="entry name" value="BBE"/>
</dbReference>
<dbReference type="InterPro" id="IPR016166">
    <property type="entry name" value="FAD-bd_PCMH"/>
</dbReference>
<dbReference type="InterPro" id="IPR036318">
    <property type="entry name" value="FAD-bd_PCMH-like_sf"/>
</dbReference>
<dbReference type="InterPro" id="IPR016167">
    <property type="entry name" value="FAD-bd_PCMH_sub1"/>
</dbReference>
<dbReference type="InterPro" id="IPR016169">
    <property type="entry name" value="FAD-bd_PCMH_sub2"/>
</dbReference>
<dbReference type="InterPro" id="IPR050416">
    <property type="entry name" value="FAD-linked_Oxidoreductase"/>
</dbReference>
<dbReference type="InterPro" id="IPR006094">
    <property type="entry name" value="Oxid_FAD_bind_N"/>
</dbReference>
<dbReference type="PANTHER" id="PTHR42973">
    <property type="entry name" value="BINDING OXIDOREDUCTASE, PUTATIVE (AFU_ORTHOLOGUE AFUA_1G17690)-RELATED"/>
    <property type="match status" value="1"/>
</dbReference>
<dbReference type="PANTHER" id="PTHR42973:SF8">
    <property type="entry name" value="FAD-BINDING PCMH-TYPE DOMAIN-CONTAINING PROTEIN"/>
    <property type="match status" value="1"/>
</dbReference>
<dbReference type="Pfam" id="PF08031">
    <property type="entry name" value="BBE"/>
    <property type="match status" value="1"/>
</dbReference>
<dbReference type="Pfam" id="PF01565">
    <property type="entry name" value="FAD_binding_4"/>
    <property type="match status" value="1"/>
</dbReference>
<dbReference type="SUPFAM" id="SSF56176">
    <property type="entry name" value="FAD-binding/transporter-associated domain-like"/>
    <property type="match status" value="1"/>
</dbReference>
<dbReference type="PROSITE" id="PS51387">
    <property type="entry name" value="FAD_PCMH"/>
    <property type="match status" value="1"/>
</dbReference>
<sequence length="520" mass="56591">MKSFSLLASAGLATLASLPLTMAGVITPSYFDKHPLSRRQLSDAQVQRELGPQLSRGATIIGPGGPGWDDAIERFDNESRPTIRLVVVPAVESDIATVVKLANRFGIPFLVKNRGHALTNTIGRFRGIQIDMSRLTTITIQPGEPAESAWFQGGAWDKQAIEYLWDRGYVTVTGSCDCVGMMGPGLGGGHGRYQGLYGLISDNLINMNVVLADGSAVRVNATSNPDLWWGMQGAGHNLGIVTSFQSKIYPRKIDTWHYHSYTYTQDKLEAVFGALNTFHGNGDGSTPVLMGLNTGGFYIDPSVSQTEPVVSWVFGYAGPASEAEALLEPFSRLGPAAEQSGDVPYPGVATAMGTGQDQPLCQPGDAHVQVTSQFNVYNATAERALYQLFNRTIAAHPQLADSVAFHEGYSTAAVDRADPSASAVAFRDRKLLMFFDARLKPADAADPEVLGMAREFGRQVRRIWNEGAPDLKPATYVNYAAGDEPLESMYGYDAARLRRLRNIKRKYDPHGRFVYYNPIA</sequence>
<evidence type="ECO:0000250" key="1">
    <source>
        <dbReference type="UniProtKB" id="Q5BEJ5"/>
    </source>
</evidence>
<evidence type="ECO:0000255" key="2"/>
<evidence type="ECO:0000255" key="3">
    <source>
        <dbReference type="PROSITE-ProRule" id="PRU00498"/>
    </source>
</evidence>
<evidence type="ECO:0000255" key="4">
    <source>
        <dbReference type="PROSITE-ProRule" id="PRU00718"/>
    </source>
</evidence>
<evidence type="ECO:0000269" key="5">
    <source>
    </source>
</evidence>
<evidence type="ECO:0000303" key="6">
    <source>
    </source>
</evidence>
<evidence type="ECO:0000305" key="7"/>
<evidence type="ECO:0000305" key="8">
    <source>
    </source>
</evidence>
<reference key="1">
    <citation type="journal article" date="2005" name="Nature">
        <title>The genome sequence of the rice blast fungus Magnaporthe grisea.</title>
        <authorList>
            <person name="Dean R.A."/>
            <person name="Talbot N.J."/>
            <person name="Ebbole D.J."/>
            <person name="Farman M.L."/>
            <person name="Mitchell T.K."/>
            <person name="Orbach M.J."/>
            <person name="Thon M.R."/>
            <person name="Kulkarni R."/>
            <person name="Xu J.-R."/>
            <person name="Pan H."/>
            <person name="Read N.D."/>
            <person name="Lee Y.-H."/>
            <person name="Carbone I."/>
            <person name="Brown D."/>
            <person name="Oh Y.Y."/>
            <person name="Donofrio N."/>
            <person name="Jeong J.S."/>
            <person name="Soanes D.M."/>
            <person name="Djonovic S."/>
            <person name="Kolomiets E."/>
            <person name="Rehmeyer C."/>
            <person name="Li W."/>
            <person name="Harding M."/>
            <person name="Kim S."/>
            <person name="Lebrun M.-H."/>
            <person name="Bohnert H."/>
            <person name="Coughlan S."/>
            <person name="Butler J."/>
            <person name="Calvo S.E."/>
            <person name="Ma L.-J."/>
            <person name="Nicol R."/>
            <person name="Purcell S."/>
            <person name="Nusbaum C."/>
            <person name="Galagan J.E."/>
            <person name="Birren B.W."/>
        </authorList>
    </citation>
    <scope>NUCLEOTIDE SEQUENCE [LARGE SCALE GENOMIC DNA]</scope>
    <source>
        <strain>70-15 / ATCC MYA-4617 / FGSC 8958</strain>
    </source>
</reference>
<reference key="2">
    <citation type="journal article" date="2017" name="Microbiology">
        <title>Unravelling the biosynthesis of pyriculol in the rice blast fungus Magnaporthe oryzae.</title>
        <authorList>
            <person name="Jacob S."/>
            <person name="Groetsch T."/>
            <person name="Foster A.J."/>
            <person name="Schueffler A."/>
            <person name="Rieger P.H."/>
            <person name="Sandjo L.P."/>
            <person name="Liermann J.C."/>
            <person name="Opatz T."/>
            <person name="Thines E."/>
        </authorList>
    </citation>
    <scope>IDENTIFICATION</scope>
    <scope>INDUCTION</scope>
    <scope>FUNCTION</scope>
    <scope>PATHWAY</scope>
</reference>
<proteinExistence type="evidence at transcript level"/>
<feature type="signal peptide" evidence="2">
    <location>
        <begin position="1"/>
        <end position="23"/>
    </location>
</feature>
<feature type="chain" id="PRO_5003465654" description="FAD-linked oxidoreductase OXR2" evidence="2">
    <location>
        <begin position="24"/>
        <end position="520"/>
    </location>
</feature>
<feature type="domain" description="FAD-binding PCMH-type" evidence="4">
    <location>
        <begin position="79"/>
        <end position="251"/>
    </location>
</feature>
<feature type="glycosylation site" description="N-linked (GlcNAc...) asparagine" evidence="3">
    <location>
        <position position="77"/>
    </location>
</feature>
<feature type="glycosylation site" description="N-linked (GlcNAc...) asparagine" evidence="3">
    <location>
        <position position="220"/>
    </location>
</feature>
<feature type="glycosylation site" description="N-linked (GlcNAc...) asparagine" evidence="3">
    <location>
        <position position="378"/>
    </location>
</feature>
<feature type="glycosylation site" description="N-linked (GlcNAc...) asparagine" evidence="3">
    <location>
        <position position="390"/>
    </location>
</feature>
<comment type="function">
    <text evidence="5 8">FAD-linked oxidoreductase; part of the gene cluster that mediates the biosynthesis of pyriculol and pyriculariol, two heptaketides that induce lesion formation upon application on rice leaves but are dispensable for pathogenicity (PubMed:27902426). The highly reducing polyketide synthase synthesizes the heptaketide backbone of pyriculol and pyriculariol (PubMed:27902426). Pyriculol and pyriculariol contain several hydroxyl moieties and double bonds, so it can be assumed that several reduction steps occur during biosynthesis. These reactions could be executed by PKS19 itself or partly by the tailoring enzymes OXR1, OXR2, RED1, RED2 or RED3, identified within the cluster (Probable). The FAD-linked oxidoreductase OXR1 is the only tailoring enzyme for which the function has been determined yet, and is involved in the oxidation of dihydropyriculol and dihydropyriculariol into pyriculol and pyriculariol, respectively (PubMed:27902426).</text>
</comment>
<comment type="cofactor">
    <cofactor evidence="1">
        <name>FAD</name>
        <dbReference type="ChEBI" id="CHEBI:57692"/>
    </cofactor>
</comment>
<comment type="pathway">
    <text evidence="8">Polyketide biosynthesis.</text>
</comment>
<comment type="induction">
    <text evidence="5">Expression is increased in rice-extract medium (REM) and is correlated with the production of pyriculol.</text>
</comment>
<comment type="similarity">
    <text evidence="7">Belongs to the oxygen-dependent FAD-linked oxidoreductase family.</text>
</comment>
<gene>
    <name evidence="6" type="primary">OXR2</name>
    <name type="ORF">MGG_16812</name>
</gene>
<organism>
    <name type="scientific">Pyricularia oryzae (strain 70-15 / ATCC MYA-4617 / FGSC 8958)</name>
    <name type="common">Rice blast fungus</name>
    <name type="synonym">Magnaporthe oryzae</name>
    <dbReference type="NCBI Taxonomy" id="242507"/>
    <lineage>
        <taxon>Eukaryota</taxon>
        <taxon>Fungi</taxon>
        <taxon>Dikarya</taxon>
        <taxon>Ascomycota</taxon>
        <taxon>Pezizomycotina</taxon>
        <taxon>Sordariomycetes</taxon>
        <taxon>Sordariomycetidae</taxon>
        <taxon>Magnaporthales</taxon>
        <taxon>Pyriculariaceae</taxon>
        <taxon>Pyricularia</taxon>
    </lineage>
</organism>